<organism>
    <name type="scientific">Mycobacterium tuberculosis (strain ATCC 25618 / H37Rv)</name>
    <dbReference type="NCBI Taxonomy" id="83332"/>
    <lineage>
        <taxon>Bacteria</taxon>
        <taxon>Bacillati</taxon>
        <taxon>Actinomycetota</taxon>
        <taxon>Actinomycetes</taxon>
        <taxon>Mycobacteriales</taxon>
        <taxon>Mycobacteriaceae</taxon>
        <taxon>Mycobacterium</taxon>
        <taxon>Mycobacterium tuberculosis complex</taxon>
    </lineage>
</organism>
<protein>
    <recommendedName>
        <fullName evidence="6">L-asparaginase</fullName>
        <shortName>L-ASNase</shortName>
        <ecNumber evidence="3 4">3.5.1.1</ecNumber>
    </recommendedName>
    <alternativeName>
        <fullName>L-asparagine amidohydrolase</fullName>
    </alternativeName>
</protein>
<feature type="chain" id="PRO_0000171084" description="L-asparaginase">
    <location>
        <begin position="1"/>
        <end position="315"/>
    </location>
</feature>
<feature type="domain" description="Asparaginase/glutaminase" evidence="2">
    <location>
        <begin position="2"/>
        <end position="315"/>
    </location>
</feature>
<feature type="active site" description="O-isoaspartyl threonine intermediate" evidence="1">
    <location>
        <position position="12"/>
    </location>
</feature>
<feature type="binding site" evidence="1">
    <location>
        <begin position="52"/>
        <end position="53"/>
    </location>
    <ligand>
        <name>substrate</name>
    </ligand>
</feature>
<feature type="binding site" evidence="1">
    <location>
        <begin position="84"/>
        <end position="85"/>
    </location>
    <ligand>
        <name>substrate</name>
    </ligand>
</feature>
<name>ASPG_MYCTU</name>
<comment type="function">
    <text evidence="3 4">Has a dual function in both nitrogen assimilation and in protection against acid stress during infection through asparagine hydrolysis and NH4(+) release (PubMed:24586151). Catalyzes asparagine hydrolysis (PubMed:24586151, PubMed:33412160). Cannot use glutamine (PubMed:24586151, PubMed:33412160). Required for intracellular survival inside macrophages during host colonization (PubMed:24586151). Mediates phagosome acidification arrest and resistance to acid stress through the formation of acid-neutralizing NH4(+) ions (PubMed:24586151). In addition, may induce stress to primary immune cells and compromise the host immune response (PubMed:33412160).</text>
</comment>
<comment type="catalytic activity">
    <reaction evidence="3 4">
        <text>L-asparagine + H2O = L-aspartate + NH4(+)</text>
        <dbReference type="Rhea" id="RHEA:21016"/>
        <dbReference type="ChEBI" id="CHEBI:15377"/>
        <dbReference type="ChEBI" id="CHEBI:28938"/>
        <dbReference type="ChEBI" id="CHEBI:29991"/>
        <dbReference type="ChEBI" id="CHEBI:58048"/>
        <dbReference type="EC" id="3.5.1.1"/>
    </reaction>
</comment>
<comment type="activity regulation">
    <text evidence="4">Activity in enhanced in the presence of K(+) and Mn(2+) and reduced by about 40% in the presence of Cu(2+).</text>
</comment>
<comment type="biophysicochemical properties">
    <kinetics>
        <KM evidence="4">8.3 mM for L-asparagine (at pH 8.0)</KM>
        <KM evidence="4">19.57 mM for L-asparagine (at pH 7.4)</KM>
        <KM evidence="4">0.38 mM for L-asparagine (at pH 5.5)</KM>
        <Vmax evidence="4">797.0 umol/min/mg enzyme (at pH 8.0)</Vmax>
        <Vmax evidence="4">1587.0 umol/min/mg enzyme (at pH 7.4)</Vmax>
        <Vmax evidence="4">74.0 umol/min/mg enzyme (at pH 5.5)</Vmax>
        <text evidence="4">kcat is 869 sec(-1) (at pH 8.0). kcat is 1732 sec(-1) (at pH 7.4). kcat is 80.7 sec(-1) (at pH 5.5).</text>
    </kinetics>
    <phDependence>
        <text evidence="4">Optimum pH is 8.0. Retains about 40% activity at pH 5.5.</text>
    </phDependence>
    <temperatureDependence>
        <text evidence="4">Optimum temperature is 37 degrees Celsius. Shows maximal activity between 30 and 40 degrees Celsius.</text>
    </temperatureDependence>
</comment>
<comment type="subunit">
    <text evidence="4">Homodimer (PubMed:33412160). Can form tetramers and higher multimers, probably resulting from the dynamic association of dimers (PubMed:33412160).</text>
</comment>
<comment type="subcellular location">
    <subcellularLocation>
        <location evidence="3">Secreted</location>
    </subcellularLocation>
    <text evidence="3">Probably secreted via the ESX-5 / type VII secretion system (T7SS). Secreted in host cells during infection.</text>
</comment>
<comment type="disruption phenotype">
    <text evidence="3">Not essential. The growth of the knockout mutant is impaired, although not fully abolished, when asparagine is provided as sole nitrogen donor. Nitrogen assimilation from asparagine into glutamate and glutamine is fully abrogated in the knockout mutant at acidic pH. Mutant is impaired in host tissue colonization.</text>
</comment>
<comment type="similarity">
    <text evidence="7">Belongs to the asparaginase 1 family.</text>
</comment>
<comment type="sequence caution" evidence="7">
    <conflict type="erroneous initiation">
        <sequence resource="EMBL-CDS" id="CCP44302"/>
    </conflict>
    <text>Extended N-terminus.</text>
</comment>
<sequence>MARLTVITTGGTISTTAGPDGVLRPTHCGATLIAGLDMDSDIEVVDLMALDSSKLTPADWDRIGAAVQEAFRGGADGVVITHGTDTLEETALWLDLTYAGSRPVVLTGAMLSADAPGADGPANLRDALAVAADPAARDLGVLVSFGGRVLQPLGLHKVANPDLCGFAGESLGFTSGGVRLTRTKTRPYLGDLGAAVAPRVDIVAVYPGSDAVAMDACVAAGARAVVLEALGSGNAGAAVIEGVRRHCRDGSDPVVIAVSTRVAGARVGAGYGPGHDLVEAGAVMVPRLPPSQARVLLMAALAANSPVADVIDRWG</sequence>
<evidence type="ECO:0000250" key="1">
    <source>
        <dbReference type="UniProtKB" id="P00805"/>
    </source>
</evidence>
<evidence type="ECO:0000255" key="2">
    <source>
        <dbReference type="PROSITE-ProRule" id="PRU01068"/>
    </source>
</evidence>
<evidence type="ECO:0000269" key="3">
    <source>
    </source>
</evidence>
<evidence type="ECO:0000269" key="4">
    <source>
    </source>
</evidence>
<evidence type="ECO:0000303" key="5">
    <source>
    </source>
</evidence>
<evidence type="ECO:0000303" key="6">
    <source>
    </source>
</evidence>
<evidence type="ECO:0000305" key="7"/>
<reference key="1">
    <citation type="journal article" date="1998" name="Nature">
        <title>Deciphering the biology of Mycobacterium tuberculosis from the complete genome sequence.</title>
        <authorList>
            <person name="Cole S.T."/>
            <person name="Brosch R."/>
            <person name="Parkhill J."/>
            <person name="Garnier T."/>
            <person name="Churcher C.M."/>
            <person name="Harris D.E."/>
            <person name="Gordon S.V."/>
            <person name="Eiglmeier K."/>
            <person name="Gas S."/>
            <person name="Barry C.E. III"/>
            <person name="Tekaia F."/>
            <person name="Badcock K."/>
            <person name="Basham D."/>
            <person name="Brown D."/>
            <person name="Chillingworth T."/>
            <person name="Connor R."/>
            <person name="Davies R.M."/>
            <person name="Devlin K."/>
            <person name="Feltwell T."/>
            <person name="Gentles S."/>
            <person name="Hamlin N."/>
            <person name="Holroyd S."/>
            <person name="Hornsby T."/>
            <person name="Jagels K."/>
            <person name="Krogh A."/>
            <person name="McLean J."/>
            <person name="Moule S."/>
            <person name="Murphy L.D."/>
            <person name="Oliver S."/>
            <person name="Osborne J."/>
            <person name="Quail M.A."/>
            <person name="Rajandream M.A."/>
            <person name="Rogers J."/>
            <person name="Rutter S."/>
            <person name="Seeger K."/>
            <person name="Skelton S."/>
            <person name="Squares S."/>
            <person name="Squares R."/>
            <person name="Sulston J.E."/>
            <person name="Taylor K."/>
            <person name="Whitehead S."/>
            <person name="Barrell B.G."/>
        </authorList>
    </citation>
    <scope>NUCLEOTIDE SEQUENCE [LARGE SCALE GENOMIC DNA]</scope>
    <source>
        <strain>ATCC 25618 / H37Rv</strain>
    </source>
</reference>
<reference key="2">
    <citation type="journal article" date="2011" name="Mol. Cell. Proteomics">
        <title>Proteogenomic analysis of Mycobacterium tuberculosis by high resolution mass spectrometry.</title>
        <authorList>
            <person name="Kelkar D.S."/>
            <person name="Kumar D."/>
            <person name="Kumar P."/>
            <person name="Balakrishnan L."/>
            <person name="Muthusamy B."/>
            <person name="Yadav A.K."/>
            <person name="Shrivastava P."/>
            <person name="Marimuthu A."/>
            <person name="Anand S."/>
            <person name="Sundaram H."/>
            <person name="Kingsbury R."/>
            <person name="Harsha H.C."/>
            <person name="Nair B."/>
            <person name="Prasad T.S."/>
            <person name="Chauhan D.S."/>
            <person name="Katoch K."/>
            <person name="Katoch V.M."/>
            <person name="Kumar P."/>
            <person name="Chaerkady R."/>
            <person name="Ramachandran S."/>
            <person name="Dash D."/>
            <person name="Pandey A."/>
        </authorList>
    </citation>
    <scope>IDENTIFICATION BY MASS SPECTROMETRY [LARGE SCALE ANALYSIS]</scope>
    <source>
        <strain>ATCC 25618 / H37Rv</strain>
    </source>
</reference>
<reference key="3">
    <citation type="journal article" date="2014" name="PLoS Pathog.">
        <title>Mycobacterium tuberculosis exploits asparagine to assimilate nitrogen and resist acid stress during infection.</title>
        <authorList>
            <person name="Gouzy A."/>
            <person name="Larrouy-Maumus G."/>
            <person name="Bottai D."/>
            <person name="Levillain F."/>
            <person name="Dumas A."/>
            <person name="Wallach J.B."/>
            <person name="Caire-Brandli I."/>
            <person name="de Chastellier C."/>
            <person name="Wu T.D."/>
            <person name="Poincloux R."/>
            <person name="Brosch R."/>
            <person name="Guerquin-Kern J.L."/>
            <person name="Schnappinger D."/>
            <person name="Sorio de Carvalho L.P."/>
            <person name="Poquet Y."/>
            <person name="Neyrolles O."/>
        </authorList>
    </citation>
    <scope>FUNCTION</scope>
    <scope>CATALYTIC ACTIVITY</scope>
    <scope>SUBCELLULAR LOCATION</scope>
    <scope>DISRUPTION PHENOTYPE</scope>
</reference>
<reference key="4">
    <citation type="journal article" date="2021" name="Biochimie">
        <title>Distinct functional properties of secretory L-asparaginase Rv1538c involved in phagosomal survival of Mycobacterium tuberculosis.</title>
        <authorList>
            <person name="Kataria A."/>
            <person name="Patel A.K."/>
            <person name="Kundu B."/>
        </authorList>
    </citation>
    <scope>FUNCTION</scope>
    <scope>CATALYTIC ACTIVITY</scope>
    <scope>ACTIVITY REGULATION</scope>
    <scope>BIOPHYSICOCHEMICAL PROPERTIES</scope>
    <scope>SUBUNIT</scope>
    <scope>IDENTIFICATION BY MASS SPECTROMETRY</scope>
    <source>
        <strain>CCDC 5079</strain>
    </source>
</reference>
<accession>P9WPX5</accession>
<accession>L0T751</accession>
<accession>P63627</accession>
<accession>Q10759</accession>
<keyword id="KW-0378">Hydrolase</keyword>
<keyword id="KW-1185">Reference proteome</keyword>
<keyword id="KW-0964">Secreted</keyword>
<gene>
    <name evidence="5" type="primary">ansA</name>
    <name type="ordered locus">Rv1538c</name>
    <name type="ORF">MTCY48.27</name>
</gene>
<proteinExistence type="evidence at protein level"/>
<dbReference type="EC" id="3.5.1.1" evidence="3 4"/>
<dbReference type="EMBL" id="AL123456">
    <property type="protein sequence ID" value="CCP44302.1"/>
    <property type="status" value="ALT_INIT"/>
    <property type="molecule type" value="Genomic_DNA"/>
</dbReference>
<dbReference type="PIR" id="G70760">
    <property type="entry name" value="G70760"/>
</dbReference>
<dbReference type="RefSeq" id="NP_216054.1">
    <property type="nucleotide sequence ID" value="NC_000962.3"/>
</dbReference>
<dbReference type="SMR" id="P9WPX5"/>
<dbReference type="FunCoup" id="P9WPX5">
    <property type="interactions" value="71"/>
</dbReference>
<dbReference type="STRING" id="83332.Rv1538c"/>
<dbReference type="PaxDb" id="83332-Rv1538c"/>
<dbReference type="DNASU" id="886410"/>
<dbReference type="GeneID" id="886410"/>
<dbReference type="KEGG" id="mtu:Rv1538c"/>
<dbReference type="TubercuList" id="Rv1538c"/>
<dbReference type="eggNOG" id="COG0252">
    <property type="taxonomic scope" value="Bacteria"/>
</dbReference>
<dbReference type="InParanoid" id="P9WPX5"/>
<dbReference type="OrthoDB" id="9788068at2"/>
<dbReference type="SABIO-RK" id="P9WPX5"/>
<dbReference type="Proteomes" id="UP000001584">
    <property type="component" value="Chromosome"/>
</dbReference>
<dbReference type="GO" id="GO:0005576">
    <property type="term" value="C:extracellular region"/>
    <property type="evidence" value="ECO:0007669"/>
    <property type="project" value="UniProtKB-SubCell"/>
</dbReference>
<dbReference type="GO" id="GO:0004067">
    <property type="term" value="F:asparaginase activity"/>
    <property type="evidence" value="ECO:0007669"/>
    <property type="project" value="UniProtKB-EC"/>
</dbReference>
<dbReference type="GO" id="GO:0006528">
    <property type="term" value="P:asparagine metabolic process"/>
    <property type="evidence" value="ECO:0007669"/>
    <property type="project" value="InterPro"/>
</dbReference>
<dbReference type="CDD" id="cd08964">
    <property type="entry name" value="L-asparaginase_II"/>
    <property type="match status" value="1"/>
</dbReference>
<dbReference type="FunFam" id="3.40.50.40:FF:000008">
    <property type="entry name" value="Probable L-asparaginase"/>
    <property type="match status" value="1"/>
</dbReference>
<dbReference type="Gene3D" id="3.40.50.40">
    <property type="match status" value="1"/>
</dbReference>
<dbReference type="Gene3D" id="3.40.50.1170">
    <property type="entry name" value="L-asparaginase, N-terminal domain"/>
    <property type="match status" value="1"/>
</dbReference>
<dbReference type="InterPro" id="IPR004550">
    <property type="entry name" value="AsnASE_II"/>
</dbReference>
<dbReference type="InterPro" id="IPR036152">
    <property type="entry name" value="Asp/glu_Ase-like_sf"/>
</dbReference>
<dbReference type="InterPro" id="IPR006034">
    <property type="entry name" value="Asparaginase/glutaminase-like"/>
</dbReference>
<dbReference type="InterPro" id="IPR020827">
    <property type="entry name" value="Asparaginase/glutaminase_AS1"/>
</dbReference>
<dbReference type="InterPro" id="IPR027475">
    <property type="entry name" value="Asparaginase/glutaminase_AS2"/>
</dbReference>
<dbReference type="InterPro" id="IPR040919">
    <property type="entry name" value="Asparaginase_C"/>
</dbReference>
<dbReference type="InterPro" id="IPR027473">
    <property type="entry name" value="L-asparaginase_C"/>
</dbReference>
<dbReference type="InterPro" id="IPR027474">
    <property type="entry name" value="L-asparaginase_N"/>
</dbReference>
<dbReference type="InterPro" id="IPR037152">
    <property type="entry name" value="L-asparaginase_N_sf"/>
</dbReference>
<dbReference type="PANTHER" id="PTHR11707:SF28">
    <property type="entry name" value="60 KDA LYSOPHOSPHOLIPASE"/>
    <property type="match status" value="1"/>
</dbReference>
<dbReference type="PANTHER" id="PTHR11707">
    <property type="entry name" value="L-ASPARAGINASE"/>
    <property type="match status" value="1"/>
</dbReference>
<dbReference type="Pfam" id="PF00710">
    <property type="entry name" value="Asparaginase"/>
    <property type="match status" value="1"/>
</dbReference>
<dbReference type="Pfam" id="PF17763">
    <property type="entry name" value="Asparaginase_C"/>
    <property type="match status" value="1"/>
</dbReference>
<dbReference type="PIRSF" id="PIRSF001220">
    <property type="entry name" value="L-ASNase_gatD"/>
    <property type="match status" value="1"/>
</dbReference>
<dbReference type="PIRSF" id="PIRSF500176">
    <property type="entry name" value="L_ASNase"/>
    <property type="match status" value="1"/>
</dbReference>
<dbReference type="PRINTS" id="PR00139">
    <property type="entry name" value="ASNGLNASE"/>
</dbReference>
<dbReference type="SFLD" id="SFLDS00057">
    <property type="entry name" value="Glutaminase/Asparaginase"/>
    <property type="match status" value="1"/>
</dbReference>
<dbReference type="SMART" id="SM00870">
    <property type="entry name" value="Asparaginase"/>
    <property type="match status" value="1"/>
</dbReference>
<dbReference type="SUPFAM" id="SSF53774">
    <property type="entry name" value="Glutaminase/Asparaginase"/>
    <property type="match status" value="1"/>
</dbReference>
<dbReference type="PROSITE" id="PS00144">
    <property type="entry name" value="ASN_GLN_ASE_1"/>
    <property type="match status" value="1"/>
</dbReference>
<dbReference type="PROSITE" id="PS00917">
    <property type="entry name" value="ASN_GLN_ASE_2"/>
    <property type="match status" value="1"/>
</dbReference>
<dbReference type="PROSITE" id="PS51732">
    <property type="entry name" value="ASN_GLN_ASE_3"/>
    <property type="match status" value="1"/>
</dbReference>